<dbReference type="EC" id="3.5.3.8" evidence="1"/>
<dbReference type="EMBL" id="CP000262">
    <property type="protein sequence ID" value="ABF38820.1"/>
    <property type="status" value="ALT_INIT"/>
    <property type="molecule type" value="Genomic_DNA"/>
</dbReference>
<dbReference type="SMR" id="Q1J4B6"/>
<dbReference type="KEGG" id="spi:MGAS10750_Spy1870"/>
<dbReference type="HOGENOM" id="CLU_039478_2_0_9"/>
<dbReference type="UniPathway" id="UPA00379">
    <property type="reaction ID" value="UER00552"/>
</dbReference>
<dbReference type="Proteomes" id="UP000002434">
    <property type="component" value="Chromosome"/>
</dbReference>
<dbReference type="GO" id="GO:0008783">
    <property type="term" value="F:agmatinase activity"/>
    <property type="evidence" value="ECO:0007669"/>
    <property type="project" value="TreeGrafter"/>
</dbReference>
<dbReference type="GO" id="GO:0050415">
    <property type="term" value="F:formimidoylglutamase activity"/>
    <property type="evidence" value="ECO:0007669"/>
    <property type="project" value="UniProtKB-UniRule"/>
</dbReference>
<dbReference type="GO" id="GO:0030145">
    <property type="term" value="F:manganese ion binding"/>
    <property type="evidence" value="ECO:0007669"/>
    <property type="project" value="UniProtKB-UniRule"/>
</dbReference>
<dbReference type="GO" id="GO:0019556">
    <property type="term" value="P:L-histidine catabolic process to glutamate and formamide"/>
    <property type="evidence" value="ECO:0007669"/>
    <property type="project" value="UniProtKB-UniPathway"/>
</dbReference>
<dbReference type="GO" id="GO:0019557">
    <property type="term" value="P:L-histidine catabolic process to glutamate and formate"/>
    <property type="evidence" value="ECO:0007669"/>
    <property type="project" value="UniProtKB-UniPathway"/>
</dbReference>
<dbReference type="GO" id="GO:0033389">
    <property type="term" value="P:putrescine biosynthetic process from arginine, via agmatine"/>
    <property type="evidence" value="ECO:0007669"/>
    <property type="project" value="TreeGrafter"/>
</dbReference>
<dbReference type="CDD" id="cd09988">
    <property type="entry name" value="Formimidoylglutamase"/>
    <property type="match status" value="1"/>
</dbReference>
<dbReference type="Gene3D" id="3.40.800.10">
    <property type="entry name" value="Ureohydrolase domain"/>
    <property type="match status" value="1"/>
</dbReference>
<dbReference type="HAMAP" id="MF_00737">
    <property type="entry name" value="Formimidoylglutam"/>
    <property type="match status" value="1"/>
</dbReference>
<dbReference type="InterPro" id="IPR005923">
    <property type="entry name" value="HutG"/>
</dbReference>
<dbReference type="InterPro" id="IPR006035">
    <property type="entry name" value="Ureohydrolase"/>
</dbReference>
<dbReference type="InterPro" id="IPR023696">
    <property type="entry name" value="Ureohydrolase_dom_sf"/>
</dbReference>
<dbReference type="NCBIfam" id="NF010347">
    <property type="entry name" value="PRK13775.1"/>
    <property type="match status" value="1"/>
</dbReference>
<dbReference type="PANTHER" id="PTHR11358">
    <property type="entry name" value="ARGINASE/AGMATINASE"/>
    <property type="match status" value="1"/>
</dbReference>
<dbReference type="PANTHER" id="PTHR11358:SF35">
    <property type="entry name" value="FORMIMIDOYLGLUTAMASE"/>
    <property type="match status" value="1"/>
</dbReference>
<dbReference type="Pfam" id="PF00491">
    <property type="entry name" value="Arginase"/>
    <property type="match status" value="1"/>
</dbReference>
<dbReference type="PIRSF" id="PIRSF036979">
    <property type="entry name" value="Arginase"/>
    <property type="match status" value="1"/>
</dbReference>
<dbReference type="PRINTS" id="PR00116">
    <property type="entry name" value="ARGINASE"/>
</dbReference>
<dbReference type="SUPFAM" id="SSF52768">
    <property type="entry name" value="Arginase/deacetylase"/>
    <property type="match status" value="1"/>
</dbReference>
<dbReference type="PROSITE" id="PS51409">
    <property type="entry name" value="ARGINASE_2"/>
    <property type="match status" value="1"/>
</dbReference>
<accession>Q1J4B6</accession>
<gene>
    <name evidence="1" type="primary">hutG</name>
    <name type="ordered locus">MGAS10750_Spy1870</name>
</gene>
<evidence type="ECO:0000255" key="1">
    <source>
        <dbReference type="HAMAP-Rule" id="MF_00737"/>
    </source>
</evidence>
<evidence type="ECO:0000305" key="2"/>
<proteinExistence type="inferred from homology"/>
<sequence length="328" mass="36373">MLEDYYPSTTSYYHSGIDDDLYTAKWGMVMTFLDLNDSSLTPFEGTHFALIGFKSDKGVYINNGRVGAVESPAAIRTQLAKFPWHLGNQVMVYDVGNIDGPNRSLEQLQNSLSKAIKRMCDLNLKPIVLGGGHETAYGHYLGLRQSLSSSDDLAVINMDAHFDLRPYDQTGPNSGTGFRQMFDDAVADKRLFKYFVLGIQEHNNNLFLFDFVAKSKGIQFLTGQDIYQMGHQKVCRAIDRFLEGQERVYLTIDMDCFSVGAAPGVSAIQSLGVDPNLAVLVLQHIAASGKLVGFDVVEVSPPHDIDNHTANLAATFIFYLVQIMAQHN</sequence>
<reference key="1">
    <citation type="journal article" date="2006" name="Proc. Natl. Acad. Sci. U.S.A.">
        <title>Molecular genetic anatomy of inter- and intraserotype variation in the human bacterial pathogen group A Streptococcus.</title>
        <authorList>
            <person name="Beres S.B."/>
            <person name="Richter E.W."/>
            <person name="Nagiec M.J."/>
            <person name="Sumby P."/>
            <person name="Porcella S.F."/>
            <person name="DeLeo F.R."/>
            <person name="Musser J.M."/>
        </authorList>
    </citation>
    <scope>NUCLEOTIDE SEQUENCE [LARGE SCALE GENOMIC DNA]</scope>
    <source>
        <strain>MGAS10750</strain>
    </source>
</reference>
<name>HUTG_STRPF</name>
<organism>
    <name type="scientific">Streptococcus pyogenes serotype M4 (strain MGAS10750)</name>
    <dbReference type="NCBI Taxonomy" id="370554"/>
    <lineage>
        <taxon>Bacteria</taxon>
        <taxon>Bacillati</taxon>
        <taxon>Bacillota</taxon>
        <taxon>Bacilli</taxon>
        <taxon>Lactobacillales</taxon>
        <taxon>Streptococcaceae</taxon>
        <taxon>Streptococcus</taxon>
    </lineage>
</organism>
<protein>
    <recommendedName>
        <fullName evidence="1">Formimidoylglutamase</fullName>
        <ecNumber evidence="1">3.5.3.8</ecNumber>
    </recommendedName>
    <alternativeName>
        <fullName evidence="1">Formiminoglutamase</fullName>
    </alternativeName>
    <alternativeName>
        <fullName evidence="1">Formiminoglutamate hydrolase</fullName>
    </alternativeName>
</protein>
<keyword id="KW-0369">Histidine metabolism</keyword>
<keyword id="KW-0378">Hydrolase</keyword>
<keyword id="KW-0464">Manganese</keyword>
<keyword id="KW-0479">Metal-binding</keyword>
<comment type="function">
    <text evidence="1">Catalyzes the conversion of N-formimidoyl-L-glutamate to L-glutamate and formamide.</text>
</comment>
<comment type="catalytic activity">
    <reaction evidence="1">
        <text>N-formimidoyl-L-glutamate + H2O = formamide + L-glutamate</text>
        <dbReference type="Rhea" id="RHEA:22492"/>
        <dbReference type="ChEBI" id="CHEBI:15377"/>
        <dbReference type="ChEBI" id="CHEBI:16397"/>
        <dbReference type="ChEBI" id="CHEBI:29985"/>
        <dbReference type="ChEBI" id="CHEBI:58928"/>
        <dbReference type="EC" id="3.5.3.8"/>
    </reaction>
</comment>
<comment type="cofactor">
    <cofactor evidence="1">
        <name>Mn(2+)</name>
        <dbReference type="ChEBI" id="CHEBI:29035"/>
    </cofactor>
    <text evidence="1">Binds 2 manganese ions per subunit.</text>
</comment>
<comment type="pathway">
    <text evidence="1">Amino-acid degradation; L-histidine degradation into L-glutamate; L-glutamate from N-formimidoyl-L-glutamate (hydrolase route): step 1/1.</text>
</comment>
<comment type="similarity">
    <text evidence="1">Belongs to the arginase family.</text>
</comment>
<comment type="sequence caution" evidence="2">
    <conflict type="erroneous initiation">
        <sequence resource="EMBL-CDS" id="ABF38820"/>
    </conflict>
</comment>
<feature type="chain" id="PRO_0000258268" description="Formimidoylglutamase">
    <location>
        <begin position="1"/>
        <end position="328"/>
    </location>
</feature>
<feature type="binding site" evidence="1">
    <location>
        <position position="133"/>
    </location>
    <ligand>
        <name>Mn(2+)</name>
        <dbReference type="ChEBI" id="CHEBI:29035"/>
        <label>1</label>
    </ligand>
</feature>
<feature type="binding site" evidence="1">
    <location>
        <position position="159"/>
    </location>
    <ligand>
        <name>Mn(2+)</name>
        <dbReference type="ChEBI" id="CHEBI:29035"/>
        <label>1</label>
    </ligand>
</feature>
<feature type="binding site" evidence="1">
    <location>
        <position position="159"/>
    </location>
    <ligand>
        <name>Mn(2+)</name>
        <dbReference type="ChEBI" id="CHEBI:29035"/>
        <label>2</label>
    </ligand>
</feature>
<feature type="binding site" evidence="1">
    <location>
        <position position="161"/>
    </location>
    <ligand>
        <name>Mn(2+)</name>
        <dbReference type="ChEBI" id="CHEBI:29035"/>
        <label>2</label>
    </ligand>
</feature>
<feature type="binding site" evidence="1">
    <location>
        <position position="163"/>
    </location>
    <ligand>
        <name>Mn(2+)</name>
        <dbReference type="ChEBI" id="CHEBI:29035"/>
        <label>1</label>
    </ligand>
</feature>
<feature type="binding site" evidence="1">
    <location>
        <position position="253"/>
    </location>
    <ligand>
        <name>Mn(2+)</name>
        <dbReference type="ChEBI" id="CHEBI:29035"/>
        <label>1</label>
    </ligand>
</feature>
<feature type="binding site" evidence="1">
    <location>
        <position position="253"/>
    </location>
    <ligand>
        <name>Mn(2+)</name>
        <dbReference type="ChEBI" id="CHEBI:29035"/>
        <label>2</label>
    </ligand>
</feature>
<feature type="binding site" evidence="1">
    <location>
        <position position="255"/>
    </location>
    <ligand>
        <name>Mn(2+)</name>
        <dbReference type="ChEBI" id="CHEBI:29035"/>
        <label>2</label>
    </ligand>
</feature>